<evidence type="ECO:0000255" key="1">
    <source>
        <dbReference type="HAMAP-Rule" id="MF_01218"/>
    </source>
</evidence>
<gene>
    <name evidence="1" type="primary">upp</name>
    <name type="ordered locus">lp_2374</name>
</gene>
<comment type="function">
    <text evidence="1">Catalyzes the conversion of uracil and 5-phospho-alpha-D-ribose 1-diphosphate (PRPP) to UMP and diphosphate.</text>
</comment>
<comment type="catalytic activity">
    <reaction evidence="1">
        <text>UMP + diphosphate = 5-phospho-alpha-D-ribose 1-diphosphate + uracil</text>
        <dbReference type="Rhea" id="RHEA:13017"/>
        <dbReference type="ChEBI" id="CHEBI:17568"/>
        <dbReference type="ChEBI" id="CHEBI:33019"/>
        <dbReference type="ChEBI" id="CHEBI:57865"/>
        <dbReference type="ChEBI" id="CHEBI:58017"/>
        <dbReference type="EC" id="2.4.2.9"/>
    </reaction>
</comment>
<comment type="cofactor">
    <cofactor evidence="1">
        <name>Mg(2+)</name>
        <dbReference type="ChEBI" id="CHEBI:18420"/>
    </cofactor>
    <text evidence="1">Binds 1 Mg(2+) ion per subunit. The magnesium is bound as Mg-PRPP.</text>
</comment>
<comment type="activity regulation">
    <text evidence="1">Allosterically activated by GTP.</text>
</comment>
<comment type="pathway">
    <text evidence="1">Pyrimidine metabolism; UMP biosynthesis via salvage pathway; UMP from uracil: step 1/1.</text>
</comment>
<comment type="similarity">
    <text evidence="1">Belongs to the UPRTase family.</text>
</comment>
<keyword id="KW-0021">Allosteric enzyme</keyword>
<keyword id="KW-0328">Glycosyltransferase</keyword>
<keyword id="KW-0342">GTP-binding</keyword>
<keyword id="KW-0460">Magnesium</keyword>
<keyword id="KW-0547">Nucleotide-binding</keyword>
<keyword id="KW-1185">Reference proteome</keyword>
<keyword id="KW-0808">Transferase</keyword>
<sequence>MGKFEVLDHPLIQHKLTIIREKNCGTKVFREMVNEISTLMAYEVSRDMPLKDIEIETPIAKSTQKTLAGKKVAIVPILRAGLGMVDGFLNMIPAAKVGHVGMYRDEKTLKPVEYFVKLPSDISQRQLFVVDPMLATGGSAIMAMDMLKKRGASNIKFMCLVAAPEGVKALRDAHPDIDVYTAALDDHLNEDGYIVPGLGDAGDRLFGTK</sequence>
<reference key="1">
    <citation type="submission" date="1998-11" db="EMBL/GenBank/DDBJ databases">
        <title>L. plantarum uracil phosphoribosyltransferase (upp) and uracil permease (pyrP) genes.</title>
        <authorList>
            <person name="Horvath P."/>
            <person name="Hubert J.C."/>
            <person name="Kammerer B."/>
        </authorList>
    </citation>
    <scope>NUCLEOTIDE SEQUENCE [GENOMIC DNA]</scope>
    <source>
        <strain>ATCC 8014 / CCM 1904 / DSM 20205 / NCDO 82 / NCIB 6376</strain>
    </source>
</reference>
<reference key="2">
    <citation type="journal article" date="2003" name="Proc. Natl. Acad. Sci. U.S.A.">
        <title>Complete genome sequence of Lactobacillus plantarum WCFS1.</title>
        <authorList>
            <person name="Kleerebezem M."/>
            <person name="Boekhorst J."/>
            <person name="van Kranenburg R."/>
            <person name="Molenaar D."/>
            <person name="Kuipers O.P."/>
            <person name="Leer R."/>
            <person name="Tarchini R."/>
            <person name="Peters S.A."/>
            <person name="Sandbrink H.M."/>
            <person name="Fiers M.W.E.J."/>
            <person name="Stiekema W."/>
            <person name="Klein Lankhorst R.M."/>
            <person name="Bron P.A."/>
            <person name="Hoffer S.M."/>
            <person name="Nierop Groot M.N."/>
            <person name="Kerkhoven R."/>
            <person name="De Vries M."/>
            <person name="Ursing B."/>
            <person name="De Vos W.M."/>
            <person name="Siezen R.J."/>
        </authorList>
    </citation>
    <scope>NUCLEOTIDE SEQUENCE [LARGE SCALE GENOMIC DNA]</scope>
    <source>
        <strain>ATCC BAA-793 / NCIMB 8826 / WCFS1</strain>
    </source>
</reference>
<reference key="3">
    <citation type="journal article" date="2012" name="J. Bacteriol.">
        <title>Complete resequencing and reannotation of the Lactobacillus plantarum WCFS1 genome.</title>
        <authorList>
            <person name="Siezen R.J."/>
            <person name="Francke C."/>
            <person name="Renckens B."/>
            <person name="Boekhorst J."/>
            <person name="Wels M."/>
            <person name="Kleerebezem M."/>
            <person name="van Hijum S.A."/>
        </authorList>
    </citation>
    <scope>NUCLEOTIDE SEQUENCE [LARGE SCALE GENOMIC DNA]</scope>
    <scope>GENOME REANNOTATION</scope>
    <source>
        <strain>ATCC BAA-793 / NCIMB 8826 / WCFS1</strain>
    </source>
</reference>
<feature type="chain" id="PRO_0000120838" description="Uracil phosphoribosyltransferase">
    <location>
        <begin position="1"/>
        <end position="209"/>
    </location>
</feature>
<feature type="binding site" evidence="1">
    <location>
        <position position="79"/>
    </location>
    <ligand>
        <name>5-phospho-alpha-D-ribose 1-diphosphate</name>
        <dbReference type="ChEBI" id="CHEBI:58017"/>
    </ligand>
</feature>
<feature type="binding site" evidence="1">
    <location>
        <position position="104"/>
    </location>
    <ligand>
        <name>5-phospho-alpha-D-ribose 1-diphosphate</name>
        <dbReference type="ChEBI" id="CHEBI:58017"/>
    </ligand>
</feature>
<feature type="binding site" evidence="1">
    <location>
        <begin position="131"/>
        <end position="139"/>
    </location>
    <ligand>
        <name>5-phospho-alpha-D-ribose 1-diphosphate</name>
        <dbReference type="ChEBI" id="CHEBI:58017"/>
    </ligand>
</feature>
<feature type="binding site" evidence="1">
    <location>
        <position position="194"/>
    </location>
    <ligand>
        <name>uracil</name>
        <dbReference type="ChEBI" id="CHEBI:17568"/>
    </ligand>
</feature>
<feature type="binding site" evidence="1">
    <location>
        <begin position="199"/>
        <end position="201"/>
    </location>
    <ligand>
        <name>uracil</name>
        <dbReference type="ChEBI" id="CHEBI:17568"/>
    </ligand>
</feature>
<feature type="binding site" evidence="1">
    <location>
        <position position="200"/>
    </location>
    <ligand>
        <name>5-phospho-alpha-D-ribose 1-diphosphate</name>
        <dbReference type="ChEBI" id="CHEBI:58017"/>
    </ligand>
</feature>
<accession>Q9RE01</accession>
<accession>F9UQS1</accession>
<dbReference type="EC" id="2.4.2.9" evidence="1"/>
<dbReference type="EMBL" id="AJ012720">
    <property type="protein sequence ID" value="CAB65185.1"/>
    <property type="molecule type" value="Genomic_DNA"/>
</dbReference>
<dbReference type="EMBL" id="AL935263">
    <property type="protein sequence ID" value="CCC79560.1"/>
    <property type="molecule type" value="Genomic_DNA"/>
</dbReference>
<dbReference type="RefSeq" id="WP_003639227.1">
    <property type="nucleotide sequence ID" value="NC_004567.2"/>
</dbReference>
<dbReference type="RefSeq" id="YP_004890074.1">
    <property type="nucleotide sequence ID" value="NC_004567.2"/>
</dbReference>
<dbReference type="SMR" id="Q9RE01"/>
<dbReference type="STRING" id="220668.lp_2374"/>
<dbReference type="EnsemblBacteria" id="CCC79560">
    <property type="protein sequence ID" value="CCC79560"/>
    <property type="gene ID" value="lp_2374"/>
</dbReference>
<dbReference type="GeneID" id="77215749"/>
<dbReference type="KEGG" id="lpl:lp_2374"/>
<dbReference type="PATRIC" id="fig|220668.9.peg.2006"/>
<dbReference type="eggNOG" id="COG0035">
    <property type="taxonomic scope" value="Bacteria"/>
</dbReference>
<dbReference type="HOGENOM" id="CLU_067096_2_2_9"/>
<dbReference type="OrthoDB" id="9781675at2"/>
<dbReference type="PhylomeDB" id="Q9RE01"/>
<dbReference type="BRENDA" id="2.4.2.9">
    <property type="organism ID" value="2849"/>
</dbReference>
<dbReference type="UniPathway" id="UPA00574">
    <property type="reaction ID" value="UER00636"/>
</dbReference>
<dbReference type="Proteomes" id="UP000000432">
    <property type="component" value="Chromosome"/>
</dbReference>
<dbReference type="GO" id="GO:0005525">
    <property type="term" value="F:GTP binding"/>
    <property type="evidence" value="ECO:0007669"/>
    <property type="project" value="UniProtKB-KW"/>
</dbReference>
<dbReference type="GO" id="GO:0000287">
    <property type="term" value="F:magnesium ion binding"/>
    <property type="evidence" value="ECO:0007669"/>
    <property type="project" value="UniProtKB-UniRule"/>
</dbReference>
<dbReference type="GO" id="GO:0004845">
    <property type="term" value="F:uracil phosphoribosyltransferase activity"/>
    <property type="evidence" value="ECO:0007669"/>
    <property type="project" value="UniProtKB-UniRule"/>
</dbReference>
<dbReference type="GO" id="GO:0044206">
    <property type="term" value="P:UMP salvage"/>
    <property type="evidence" value="ECO:0007669"/>
    <property type="project" value="UniProtKB-UniRule"/>
</dbReference>
<dbReference type="GO" id="GO:0006223">
    <property type="term" value="P:uracil salvage"/>
    <property type="evidence" value="ECO:0007669"/>
    <property type="project" value="InterPro"/>
</dbReference>
<dbReference type="CDD" id="cd06223">
    <property type="entry name" value="PRTases_typeI"/>
    <property type="match status" value="1"/>
</dbReference>
<dbReference type="FunFam" id="3.40.50.2020:FF:000003">
    <property type="entry name" value="Uracil phosphoribosyltransferase"/>
    <property type="match status" value="1"/>
</dbReference>
<dbReference type="Gene3D" id="3.40.50.2020">
    <property type="match status" value="1"/>
</dbReference>
<dbReference type="HAMAP" id="MF_01218_B">
    <property type="entry name" value="Upp_B"/>
    <property type="match status" value="1"/>
</dbReference>
<dbReference type="InterPro" id="IPR000836">
    <property type="entry name" value="PRibTrfase_dom"/>
</dbReference>
<dbReference type="InterPro" id="IPR029057">
    <property type="entry name" value="PRTase-like"/>
</dbReference>
<dbReference type="InterPro" id="IPR034332">
    <property type="entry name" value="Upp_B"/>
</dbReference>
<dbReference type="InterPro" id="IPR050054">
    <property type="entry name" value="UPRTase/APRTase"/>
</dbReference>
<dbReference type="InterPro" id="IPR005765">
    <property type="entry name" value="Ura_phspho_trans"/>
</dbReference>
<dbReference type="NCBIfam" id="NF001097">
    <property type="entry name" value="PRK00129.1"/>
    <property type="match status" value="1"/>
</dbReference>
<dbReference type="NCBIfam" id="TIGR01091">
    <property type="entry name" value="upp"/>
    <property type="match status" value="1"/>
</dbReference>
<dbReference type="PANTHER" id="PTHR32315">
    <property type="entry name" value="ADENINE PHOSPHORIBOSYLTRANSFERASE"/>
    <property type="match status" value="1"/>
</dbReference>
<dbReference type="PANTHER" id="PTHR32315:SF4">
    <property type="entry name" value="URACIL PHOSPHORIBOSYLTRANSFERASE, CHLOROPLASTIC"/>
    <property type="match status" value="1"/>
</dbReference>
<dbReference type="Pfam" id="PF14681">
    <property type="entry name" value="UPRTase"/>
    <property type="match status" value="1"/>
</dbReference>
<dbReference type="SUPFAM" id="SSF53271">
    <property type="entry name" value="PRTase-like"/>
    <property type="match status" value="1"/>
</dbReference>
<protein>
    <recommendedName>
        <fullName evidence="1">Uracil phosphoribosyltransferase</fullName>
        <ecNumber evidence="1">2.4.2.9</ecNumber>
    </recommendedName>
    <alternativeName>
        <fullName evidence="1">UMP pyrophosphorylase</fullName>
    </alternativeName>
    <alternativeName>
        <fullName evidence="1">UPRTase</fullName>
    </alternativeName>
</protein>
<organism>
    <name type="scientific">Lactiplantibacillus plantarum (strain ATCC BAA-793 / NCIMB 8826 / WCFS1)</name>
    <name type="common">Lactobacillus plantarum</name>
    <dbReference type="NCBI Taxonomy" id="220668"/>
    <lineage>
        <taxon>Bacteria</taxon>
        <taxon>Bacillati</taxon>
        <taxon>Bacillota</taxon>
        <taxon>Bacilli</taxon>
        <taxon>Lactobacillales</taxon>
        <taxon>Lactobacillaceae</taxon>
        <taxon>Lactiplantibacillus</taxon>
    </lineage>
</organism>
<name>UPP_LACPL</name>
<proteinExistence type="inferred from homology"/>